<sequence length="268" mass="28488">MADQSIISALVLGLIEGLTEFIPVSSTAHVLLAGHFLGFKSPGNTFAVLIQLGAILAILLVYFQKLLSIALALPTSVKARRFVFSVLIAFLPAALIGAAAHGFIKAVLFETPMLICVVLIVGGVILYAIDRLPLQPRYTDVFDYPPSLALKIGLFQCLAMIPGTSRSGATIAGALLMGTDKRSAAEFSFFLAMPTMLGAFTLDLYKNRDALSFDDIGVIAIGFIAAFVAGIVVVRSLLDFVSHRGFTPFAIWRIVVGTAGLVGLWLVG</sequence>
<keyword id="KW-0046">Antibiotic resistance</keyword>
<keyword id="KW-0997">Cell inner membrane</keyword>
<keyword id="KW-1003">Cell membrane</keyword>
<keyword id="KW-0133">Cell shape</keyword>
<keyword id="KW-0961">Cell wall biogenesis/degradation</keyword>
<keyword id="KW-0378">Hydrolase</keyword>
<keyword id="KW-0472">Membrane</keyword>
<keyword id="KW-0573">Peptidoglycan synthesis</keyword>
<keyword id="KW-1185">Reference proteome</keyword>
<keyword id="KW-0812">Transmembrane</keyword>
<keyword id="KW-1133">Transmembrane helix</keyword>
<comment type="function">
    <text evidence="1">Catalyzes the dephosphorylation of undecaprenyl diphosphate (UPP). Confers resistance to bacitracin.</text>
</comment>
<comment type="catalytic activity">
    <reaction evidence="1">
        <text>di-trans,octa-cis-undecaprenyl diphosphate + H2O = di-trans,octa-cis-undecaprenyl phosphate + phosphate + H(+)</text>
        <dbReference type="Rhea" id="RHEA:28094"/>
        <dbReference type="ChEBI" id="CHEBI:15377"/>
        <dbReference type="ChEBI" id="CHEBI:15378"/>
        <dbReference type="ChEBI" id="CHEBI:43474"/>
        <dbReference type="ChEBI" id="CHEBI:58405"/>
        <dbReference type="ChEBI" id="CHEBI:60392"/>
        <dbReference type="EC" id="3.6.1.27"/>
    </reaction>
</comment>
<comment type="subcellular location">
    <subcellularLocation>
        <location evidence="1">Cell inner membrane</location>
        <topology evidence="1">Multi-pass membrane protein</topology>
    </subcellularLocation>
</comment>
<comment type="miscellaneous">
    <text>Bacitracin is thought to be involved in the inhibition of peptidoglycan synthesis by sequestering undecaprenyl diphosphate, thereby reducing the pool of lipid carrier available.</text>
</comment>
<comment type="similarity">
    <text evidence="1">Belongs to the UppP family.</text>
</comment>
<dbReference type="EC" id="3.6.1.27" evidence="1"/>
<dbReference type="EMBL" id="CP001389">
    <property type="protein sequence ID" value="ACP27387.1"/>
    <property type="molecule type" value="Genomic_DNA"/>
</dbReference>
<dbReference type="RefSeq" id="WP_012710131.1">
    <property type="nucleotide sequence ID" value="NC_012587.1"/>
</dbReference>
<dbReference type="RefSeq" id="YP_002828140.1">
    <property type="nucleotide sequence ID" value="NC_012587.1"/>
</dbReference>
<dbReference type="SMR" id="C3MCT9"/>
<dbReference type="STRING" id="394.NGR_c36660"/>
<dbReference type="KEGG" id="rhi:NGR_c36660"/>
<dbReference type="PATRIC" id="fig|394.7.peg.6518"/>
<dbReference type="eggNOG" id="COG1968">
    <property type="taxonomic scope" value="Bacteria"/>
</dbReference>
<dbReference type="HOGENOM" id="CLU_060296_2_0_5"/>
<dbReference type="OrthoDB" id="9808289at2"/>
<dbReference type="Proteomes" id="UP000001054">
    <property type="component" value="Chromosome"/>
</dbReference>
<dbReference type="GO" id="GO:0005886">
    <property type="term" value="C:plasma membrane"/>
    <property type="evidence" value="ECO:0007669"/>
    <property type="project" value="UniProtKB-SubCell"/>
</dbReference>
<dbReference type="GO" id="GO:0050380">
    <property type="term" value="F:undecaprenyl-diphosphatase activity"/>
    <property type="evidence" value="ECO:0007669"/>
    <property type="project" value="UniProtKB-UniRule"/>
</dbReference>
<dbReference type="GO" id="GO:0071555">
    <property type="term" value="P:cell wall organization"/>
    <property type="evidence" value="ECO:0007669"/>
    <property type="project" value="UniProtKB-KW"/>
</dbReference>
<dbReference type="GO" id="GO:0009252">
    <property type="term" value="P:peptidoglycan biosynthetic process"/>
    <property type="evidence" value="ECO:0007669"/>
    <property type="project" value="UniProtKB-KW"/>
</dbReference>
<dbReference type="GO" id="GO:0008360">
    <property type="term" value="P:regulation of cell shape"/>
    <property type="evidence" value="ECO:0007669"/>
    <property type="project" value="UniProtKB-KW"/>
</dbReference>
<dbReference type="GO" id="GO:0046677">
    <property type="term" value="P:response to antibiotic"/>
    <property type="evidence" value="ECO:0007669"/>
    <property type="project" value="UniProtKB-UniRule"/>
</dbReference>
<dbReference type="HAMAP" id="MF_01006">
    <property type="entry name" value="Undec_diphosphatase"/>
    <property type="match status" value="1"/>
</dbReference>
<dbReference type="InterPro" id="IPR003824">
    <property type="entry name" value="UppP"/>
</dbReference>
<dbReference type="NCBIfam" id="NF001389">
    <property type="entry name" value="PRK00281.1-2"/>
    <property type="match status" value="1"/>
</dbReference>
<dbReference type="NCBIfam" id="TIGR00753">
    <property type="entry name" value="undec_PP_bacA"/>
    <property type="match status" value="1"/>
</dbReference>
<dbReference type="PANTHER" id="PTHR30622">
    <property type="entry name" value="UNDECAPRENYL-DIPHOSPHATASE"/>
    <property type="match status" value="1"/>
</dbReference>
<dbReference type="PANTHER" id="PTHR30622:SF3">
    <property type="entry name" value="UNDECAPRENYL-DIPHOSPHATASE"/>
    <property type="match status" value="1"/>
</dbReference>
<dbReference type="Pfam" id="PF02673">
    <property type="entry name" value="BacA"/>
    <property type="match status" value="1"/>
</dbReference>
<organism>
    <name type="scientific">Sinorhizobium fredii (strain NBRC 101917 / NGR234)</name>
    <dbReference type="NCBI Taxonomy" id="394"/>
    <lineage>
        <taxon>Bacteria</taxon>
        <taxon>Pseudomonadati</taxon>
        <taxon>Pseudomonadota</taxon>
        <taxon>Alphaproteobacteria</taxon>
        <taxon>Hyphomicrobiales</taxon>
        <taxon>Rhizobiaceae</taxon>
        <taxon>Sinorhizobium/Ensifer group</taxon>
        <taxon>Sinorhizobium</taxon>
    </lineage>
</organism>
<reference key="1">
    <citation type="journal article" date="2009" name="Appl. Environ. Microbiol.">
        <title>Rhizobium sp. strain NGR234 possesses a remarkable number of secretion systems.</title>
        <authorList>
            <person name="Schmeisser C."/>
            <person name="Liesegang H."/>
            <person name="Krysciak D."/>
            <person name="Bakkou N."/>
            <person name="Le Quere A."/>
            <person name="Wollherr A."/>
            <person name="Heinemeyer I."/>
            <person name="Morgenstern B."/>
            <person name="Pommerening-Roeser A."/>
            <person name="Flores M."/>
            <person name="Palacios R."/>
            <person name="Brenner S."/>
            <person name="Gottschalk G."/>
            <person name="Schmitz R.A."/>
            <person name="Broughton W.J."/>
            <person name="Perret X."/>
            <person name="Strittmatter A.W."/>
            <person name="Streit W.R."/>
        </authorList>
    </citation>
    <scope>NUCLEOTIDE SEQUENCE [LARGE SCALE GENOMIC DNA]</scope>
    <source>
        <strain>NBRC 101917 / NGR234</strain>
    </source>
</reference>
<name>UPPP_SINFN</name>
<protein>
    <recommendedName>
        <fullName evidence="1">Undecaprenyl-diphosphatase</fullName>
        <ecNumber evidence="1">3.6.1.27</ecNumber>
    </recommendedName>
    <alternativeName>
        <fullName evidence="1">Bacitracin resistance protein</fullName>
    </alternativeName>
    <alternativeName>
        <fullName evidence="1">Undecaprenyl pyrophosphate phosphatase</fullName>
    </alternativeName>
</protein>
<feature type="chain" id="PRO_1000148823" description="Undecaprenyl-diphosphatase">
    <location>
        <begin position="1"/>
        <end position="268"/>
    </location>
</feature>
<feature type="transmembrane region" description="Helical" evidence="1">
    <location>
        <begin position="5"/>
        <end position="25"/>
    </location>
</feature>
<feature type="transmembrane region" description="Helical" evidence="1">
    <location>
        <begin position="43"/>
        <end position="63"/>
    </location>
</feature>
<feature type="transmembrane region" description="Helical" evidence="1">
    <location>
        <begin position="84"/>
        <end position="104"/>
    </location>
</feature>
<feature type="transmembrane region" description="Helical" evidence="1">
    <location>
        <begin position="106"/>
        <end position="126"/>
    </location>
</feature>
<feature type="transmembrane region" description="Helical" evidence="1">
    <location>
        <begin position="184"/>
        <end position="204"/>
    </location>
</feature>
<feature type="transmembrane region" description="Helical" evidence="1">
    <location>
        <begin position="213"/>
        <end position="233"/>
    </location>
</feature>
<feature type="transmembrane region" description="Helical" evidence="1">
    <location>
        <begin position="248"/>
        <end position="268"/>
    </location>
</feature>
<gene>
    <name evidence="1" type="primary">uppP</name>
    <name type="ordered locus">NGR_c36660</name>
</gene>
<proteinExistence type="inferred from homology"/>
<evidence type="ECO:0000255" key="1">
    <source>
        <dbReference type="HAMAP-Rule" id="MF_01006"/>
    </source>
</evidence>
<accession>C3MCT9</accession>